<comment type="function">
    <text evidence="2">Catalyzes the formation of N(7)-methylguanine at position 46 (m7G46) in tRNA.</text>
</comment>
<comment type="catalytic activity">
    <reaction evidence="2">
        <text>guanosine(46) in tRNA + S-adenosyl-L-methionine = N(7)-methylguanosine(46) in tRNA + S-adenosyl-L-homocysteine</text>
        <dbReference type="Rhea" id="RHEA:42708"/>
        <dbReference type="Rhea" id="RHEA-COMP:10188"/>
        <dbReference type="Rhea" id="RHEA-COMP:10189"/>
        <dbReference type="ChEBI" id="CHEBI:57856"/>
        <dbReference type="ChEBI" id="CHEBI:59789"/>
        <dbReference type="ChEBI" id="CHEBI:74269"/>
        <dbReference type="ChEBI" id="CHEBI:74480"/>
        <dbReference type="EC" id="2.1.1.33"/>
    </reaction>
</comment>
<comment type="pathway">
    <text evidence="2">tRNA modification; N(7)-methylguanine-tRNA biosynthesis.</text>
</comment>
<comment type="similarity">
    <text evidence="2">Belongs to the class I-like SAM-binding methyltransferase superfamily. TrmB family.</text>
</comment>
<feature type="chain" id="PRO_0000229184" description="tRNA (guanine-N(7)-)-methyltransferase">
    <location>
        <begin position="1"/>
        <end position="241"/>
    </location>
</feature>
<feature type="active site" evidence="1">
    <location>
        <position position="146"/>
    </location>
</feature>
<feature type="binding site" evidence="2">
    <location>
        <position position="71"/>
    </location>
    <ligand>
        <name>S-adenosyl-L-methionine</name>
        <dbReference type="ChEBI" id="CHEBI:59789"/>
    </ligand>
</feature>
<feature type="binding site" evidence="2">
    <location>
        <position position="96"/>
    </location>
    <ligand>
        <name>S-adenosyl-L-methionine</name>
        <dbReference type="ChEBI" id="CHEBI:59789"/>
    </ligand>
</feature>
<feature type="binding site" evidence="2">
    <location>
        <position position="123"/>
    </location>
    <ligand>
        <name>S-adenosyl-L-methionine</name>
        <dbReference type="ChEBI" id="CHEBI:59789"/>
    </ligand>
</feature>
<feature type="binding site" evidence="2">
    <location>
        <position position="146"/>
    </location>
    <ligand>
        <name>S-adenosyl-L-methionine</name>
        <dbReference type="ChEBI" id="CHEBI:59789"/>
    </ligand>
</feature>
<feature type="binding site" evidence="2">
    <location>
        <position position="150"/>
    </location>
    <ligand>
        <name>substrate</name>
    </ligand>
</feature>
<feature type="binding site" evidence="2">
    <location>
        <position position="182"/>
    </location>
    <ligand>
        <name>substrate</name>
    </ligand>
</feature>
<feature type="binding site" evidence="2">
    <location>
        <begin position="219"/>
        <end position="222"/>
    </location>
    <ligand>
        <name>substrate</name>
    </ligand>
</feature>
<keyword id="KW-0489">Methyltransferase</keyword>
<keyword id="KW-1185">Reference proteome</keyword>
<keyword id="KW-0949">S-adenosyl-L-methionine</keyword>
<keyword id="KW-0808">Transferase</keyword>
<keyword id="KW-0819">tRNA processing</keyword>
<reference key="1">
    <citation type="journal article" date="2005" name="Genome Res.">
        <title>Coping with cold: the genome of the versatile marine Antarctica bacterium Pseudoalteromonas haloplanktis TAC125.</title>
        <authorList>
            <person name="Medigue C."/>
            <person name="Krin E."/>
            <person name="Pascal G."/>
            <person name="Barbe V."/>
            <person name="Bernsel A."/>
            <person name="Bertin P.N."/>
            <person name="Cheung F."/>
            <person name="Cruveiller S."/>
            <person name="D'Amico S."/>
            <person name="Duilio A."/>
            <person name="Fang G."/>
            <person name="Feller G."/>
            <person name="Ho C."/>
            <person name="Mangenot S."/>
            <person name="Marino G."/>
            <person name="Nilsson J."/>
            <person name="Parrilli E."/>
            <person name="Rocha E.P.C."/>
            <person name="Rouy Z."/>
            <person name="Sekowska A."/>
            <person name="Tutino M.L."/>
            <person name="Vallenet D."/>
            <person name="von Heijne G."/>
            <person name="Danchin A."/>
        </authorList>
    </citation>
    <scope>NUCLEOTIDE SEQUENCE [LARGE SCALE GENOMIC DNA]</scope>
    <source>
        <strain>TAC 125</strain>
    </source>
</reference>
<sequence>MSESSNTNLEQAKQEGKYIRTIRSFVKREGRLTKGQAAAIEKCWPIMGLEHKNGMLDLSEVFGNNNDVVLEIGFGMGKSLVEMAKNAPHLNFIGIEVHRPGVGACLMDADEAGITNLRIFEHDAVEVLADCIADESLTTLQLFFPDPWHKKRHHKRRIVQGEFVEKLRSQLKMGGVFHMATDWENYAEHMLEVMQAAPGFKNQSTTNDYVPRPDLRPLTKFEQRGHRLGHGVWDLMFERTK</sequence>
<name>TRMB_PSET1</name>
<evidence type="ECO:0000250" key="1"/>
<evidence type="ECO:0000255" key="2">
    <source>
        <dbReference type="HAMAP-Rule" id="MF_01057"/>
    </source>
</evidence>
<protein>
    <recommendedName>
        <fullName evidence="2">tRNA (guanine-N(7)-)-methyltransferase</fullName>
        <ecNumber evidence="2">2.1.1.33</ecNumber>
    </recommendedName>
    <alternativeName>
        <fullName evidence="2">tRNA (guanine(46)-N(7))-methyltransferase</fullName>
    </alternativeName>
    <alternativeName>
        <fullName evidence="2">tRNA(m7G46)-methyltransferase</fullName>
    </alternativeName>
</protein>
<organism>
    <name type="scientific">Pseudoalteromonas translucida (strain TAC 125)</name>
    <dbReference type="NCBI Taxonomy" id="326442"/>
    <lineage>
        <taxon>Bacteria</taxon>
        <taxon>Pseudomonadati</taxon>
        <taxon>Pseudomonadota</taxon>
        <taxon>Gammaproteobacteria</taxon>
        <taxon>Alteromonadales</taxon>
        <taxon>Pseudoalteromonadaceae</taxon>
        <taxon>Pseudoalteromonas</taxon>
    </lineage>
</organism>
<proteinExistence type="inferred from homology"/>
<gene>
    <name evidence="2" type="primary">trmB</name>
    <name type="ordered locus">PSHAa0553</name>
</gene>
<accession>Q3ILJ1</accession>
<dbReference type="EC" id="2.1.1.33" evidence="2"/>
<dbReference type="EMBL" id="CR954246">
    <property type="protein sequence ID" value="CAI85641.1"/>
    <property type="molecule type" value="Genomic_DNA"/>
</dbReference>
<dbReference type="SMR" id="Q3ILJ1"/>
<dbReference type="STRING" id="326442.PSHAa0553"/>
<dbReference type="KEGG" id="pha:PSHAa0553"/>
<dbReference type="PATRIC" id="fig|326442.8.peg.522"/>
<dbReference type="eggNOG" id="COG0220">
    <property type="taxonomic scope" value="Bacteria"/>
</dbReference>
<dbReference type="HOGENOM" id="CLU_050910_0_1_6"/>
<dbReference type="BioCyc" id="PHAL326442:PSHA_RS02695-MONOMER"/>
<dbReference type="UniPathway" id="UPA00989"/>
<dbReference type="Proteomes" id="UP000006843">
    <property type="component" value="Chromosome I"/>
</dbReference>
<dbReference type="GO" id="GO:0043527">
    <property type="term" value="C:tRNA methyltransferase complex"/>
    <property type="evidence" value="ECO:0007669"/>
    <property type="project" value="TreeGrafter"/>
</dbReference>
<dbReference type="GO" id="GO:0008176">
    <property type="term" value="F:tRNA (guanine(46)-N7)-methyltransferase activity"/>
    <property type="evidence" value="ECO:0007669"/>
    <property type="project" value="UniProtKB-UniRule"/>
</dbReference>
<dbReference type="FunFam" id="3.40.50.150:FF:000024">
    <property type="entry name" value="tRNA (guanine-N(7)-)-methyltransferase"/>
    <property type="match status" value="1"/>
</dbReference>
<dbReference type="Gene3D" id="3.40.50.150">
    <property type="entry name" value="Vaccinia Virus protein VP39"/>
    <property type="match status" value="1"/>
</dbReference>
<dbReference type="HAMAP" id="MF_01057">
    <property type="entry name" value="tRNA_methyltr_TrmB"/>
    <property type="match status" value="1"/>
</dbReference>
<dbReference type="InterPro" id="IPR029063">
    <property type="entry name" value="SAM-dependent_MTases_sf"/>
</dbReference>
<dbReference type="InterPro" id="IPR003358">
    <property type="entry name" value="tRNA_(Gua-N-7)_MeTrfase_Trmb"/>
</dbReference>
<dbReference type="InterPro" id="IPR055361">
    <property type="entry name" value="tRNA_methyltr_TrmB_bact"/>
</dbReference>
<dbReference type="NCBIfam" id="TIGR00091">
    <property type="entry name" value="tRNA (guanosine(46)-N7)-methyltransferase TrmB"/>
    <property type="match status" value="1"/>
</dbReference>
<dbReference type="PANTHER" id="PTHR23417">
    <property type="entry name" value="3-DEOXY-D-MANNO-OCTULOSONIC-ACID TRANSFERASE/TRNA GUANINE-N 7 - -METHYLTRANSFERASE"/>
    <property type="match status" value="1"/>
</dbReference>
<dbReference type="PANTHER" id="PTHR23417:SF14">
    <property type="entry name" value="PENTACOTRIPEPTIDE-REPEAT REGION OF PRORP DOMAIN-CONTAINING PROTEIN"/>
    <property type="match status" value="1"/>
</dbReference>
<dbReference type="Pfam" id="PF02390">
    <property type="entry name" value="Methyltransf_4"/>
    <property type="match status" value="1"/>
</dbReference>
<dbReference type="SUPFAM" id="SSF53335">
    <property type="entry name" value="S-adenosyl-L-methionine-dependent methyltransferases"/>
    <property type="match status" value="1"/>
</dbReference>
<dbReference type="PROSITE" id="PS51625">
    <property type="entry name" value="SAM_MT_TRMB"/>
    <property type="match status" value="1"/>
</dbReference>